<proteinExistence type="inferred from homology"/>
<comment type="function">
    <text evidence="1">Allows the formation of correctly charged Gln-tRNA(Gln) through the transamidation of misacylated Glu-tRNA(Gln) in organisms which lack glutaminyl-tRNA synthetase. The reaction takes place in the presence of glutamine and ATP through an activated gamma-phospho-Glu-tRNA(Gln).</text>
</comment>
<comment type="catalytic activity">
    <reaction evidence="1">
        <text>L-glutamyl-tRNA(Gln) + L-glutamine + ATP + H2O = L-glutaminyl-tRNA(Gln) + L-glutamate + ADP + phosphate + H(+)</text>
        <dbReference type="Rhea" id="RHEA:17521"/>
        <dbReference type="Rhea" id="RHEA-COMP:9681"/>
        <dbReference type="Rhea" id="RHEA-COMP:9684"/>
        <dbReference type="ChEBI" id="CHEBI:15377"/>
        <dbReference type="ChEBI" id="CHEBI:15378"/>
        <dbReference type="ChEBI" id="CHEBI:29985"/>
        <dbReference type="ChEBI" id="CHEBI:30616"/>
        <dbReference type="ChEBI" id="CHEBI:43474"/>
        <dbReference type="ChEBI" id="CHEBI:58359"/>
        <dbReference type="ChEBI" id="CHEBI:78520"/>
        <dbReference type="ChEBI" id="CHEBI:78521"/>
        <dbReference type="ChEBI" id="CHEBI:456216"/>
        <dbReference type="EC" id="6.3.5.7"/>
    </reaction>
</comment>
<comment type="subunit">
    <text evidence="1">Heterotrimer of A, B and C subunits.</text>
</comment>
<comment type="similarity">
    <text evidence="1">Belongs to the amidase family. GatA subfamily.</text>
</comment>
<gene>
    <name evidence="1" type="primary">gatA</name>
    <name type="ordered locus">BC_0351</name>
</gene>
<reference key="1">
    <citation type="journal article" date="2003" name="Nature">
        <title>Genome sequence of Bacillus cereus and comparative analysis with Bacillus anthracis.</title>
        <authorList>
            <person name="Ivanova N."/>
            <person name="Sorokin A."/>
            <person name="Anderson I."/>
            <person name="Galleron N."/>
            <person name="Candelon B."/>
            <person name="Kapatral V."/>
            <person name="Bhattacharyya A."/>
            <person name="Reznik G."/>
            <person name="Mikhailova N."/>
            <person name="Lapidus A."/>
            <person name="Chu L."/>
            <person name="Mazur M."/>
            <person name="Goltsman E."/>
            <person name="Larsen N."/>
            <person name="D'Souza M."/>
            <person name="Walunas T."/>
            <person name="Grechkin Y."/>
            <person name="Pusch G."/>
            <person name="Haselkorn R."/>
            <person name="Fonstein M."/>
            <person name="Ehrlich S.D."/>
            <person name="Overbeek R."/>
            <person name="Kyrpides N.C."/>
        </authorList>
    </citation>
    <scope>NUCLEOTIDE SEQUENCE [LARGE SCALE GENOMIC DNA]</scope>
    <source>
        <strain>ATCC 14579 / DSM 31 / CCUG 7414 / JCM 2152 / NBRC 15305 / NCIMB 9373 / NCTC 2599 / NRRL B-3711</strain>
    </source>
</reference>
<protein>
    <recommendedName>
        <fullName evidence="1">Glutamyl-tRNA(Gln) amidotransferase subunit A</fullName>
        <shortName evidence="1">Glu-ADT subunit A</shortName>
        <ecNumber evidence="1">6.3.5.7</ecNumber>
    </recommendedName>
</protein>
<sequence>MSLFDHSVSELHKKLNNKEISVTDLVEESYKRIADVEDNVKAFLTLDEENARAKAKELDAKIGAEDNGLLFGMPIGVKDNIVTNGLRTTCASKILANFDPIYDATVVQKLKAADTITIGKLNMDEFAMGSSNENSGFYATKNPWNLDYVPGGSSGGSAAAVAAGEVLFSLGSDTGGSIRQPAAYCGVVGLKPTYGRVSRYGLVAFASSLDQIGPITRTVEDNAYLLQAISGIDRMDATSANVEVGNYLAGLTGDVKGLRIAVPKEYLGEGVGEEARESVLAALKVLEGMGATWEEVSLPHSKYALATYYLLSSSEASANLSRFDGVRYGVRSDNVNNLLDLYKNTRSEGFGDEVKRRIMLGTFALSSGYYDAYYKKAQQVRTLIKNDFENVFANYDVIIGPTTPTPAFKVGEKVDDPMTMYANDILTIPVNLAGVPAISVPCGFGANNMPLGLQIIGKHFDEATIYRVAHAFEQATDYHTKKASL</sequence>
<accession>Q81IN3</accession>
<feature type="chain" id="PRO_0000105135" description="Glutamyl-tRNA(Gln) amidotransferase subunit A">
    <location>
        <begin position="1"/>
        <end position="485"/>
    </location>
</feature>
<feature type="active site" description="Charge relay system" evidence="1">
    <location>
        <position position="78"/>
    </location>
</feature>
<feature type="active site" description="Charge relay system" evidence="1">
    <location>
        <position position="153"/>
    </location>
</feature>
<feature type="active site" description="Acyl-ester intermediate" evidence="1">
    <location>
        <position position="177"/>
    </location>
</feature>
<keyword id="KW-0067">ATP-binding</keyword>
<keyword id="KW-0436">Ligase</keyword>
<keyword id="KW-0547">Nucleotide-binding</keyword>
<keyword id="KW-0648">Protein biosynthesis</keyword>
<keyword id="KW-1185">Reference proteome</keyword>
<organism>
    <name type="scientific">Bacillus cereus (strain ATCC 14579 / DSM 31 / CCUG 7414 / JCM 2152 / NBRC 15305 / NCIMB 9373 / NCTC 2599 / NRRL B-3711)</name>
    <dbReference type="NCBI Taxonomy" id="226900"/>
    <lineage>
        <taxon>Bacteria</taxon>
        <taxon>Bacillati</taxon>
        <taxon>Bacillota</taxon>
        <taxon>Bacilli</taxon>
        <taxon>Bacillales</taxon>
        <taxon>Bacillaceae</taxon>
        <taxon>Bacillus</taxon>
        <taxon>Bacillus cereus group</taxon>
    </lineage>
</organism>
<name>GATA_BACCR</name>
<evidence type="ECO:0000255" key="1">
    <source>
        <dbReference type="HAMAP-Rule" id="MF_00120"/>
    </source>
</evidence>
<dbReference type="EC" id="6.3.5.7" evidence="1"/>
<dbReference type="EMBL" id="AE016877">
    <property type="protein sequence ID" value="AAP07391.1"/>
    <property type="molecule type" value="Genomic_DNA"/>
</dbReference>
<dbReference type="RefSeq" id="NP_830190.1">
    <property type="nucleotide sequence ID" value="NC_004722.1"/>
</dbReference>
<dbReference type="RefSeq" id="WP_000051433.1">
    <property type="nucleotide sequence ID" value="NZ_CP138336.1"/>
</dbReference>
<dbReference type="SMR" id="Q81IN3"/>
<dbReference type="STRING" id="226900.BC_0351"/>
<dbReference type="GeneID" id="83633962"/>
<dbReference type="KEGG" id="bce:BC0351"/>
<dbReference type="PATRIC" id="fig|226900.8.peg.322"/>
<dbReference type="HOGENOM" id="CLU_009600_0_3_9"/>
<dbReference type="OrthoDB" id="9811471at2"/>
<dbReference type="Proteomes" id="UP000001417">
    <property type="component" value="Chromosome"/>
</dbReference>
<dbReference type="GO" id="GO:0030956">
    <property type="term" value="C:glutamyl-tRNA(Gln) amidotransferase complex"/>
    <property type="evidence" value="ECO:0007669"/>
    <property type="project" value="InterPro"/>
</dbReference>
<dbReference type="GO" id="GO:0005524">
    <property type="term" value="F:ATP binding"/>
    <property type="evidence" value="ECO:0007669"/>
    <property type="project" value="UniProtKB-KW"/>
</dbReference>
<dbReference type="GO" id="GO:0050567">
    <property type="term" value="F:glutaminyl-tRNA synthase (glutamine-hydrolyzing) activity"/>
    <property type="evidence" value="ECO:0007669"/>
    <property type="project" value="UniProtKB-UniRule"/>
</dbReference>
<dbReference type="GO" id="GO:0006412">
    <property type="term" value="P:translation"/>
    <property type="evidence" value="ECO:0007669"/>
    <property type="project" value="UniProtKB-UniRule"/>
</dbReference>
<dbReference type="Gene3D" id="3.90.1300.10">
    <property type="entry name" value="Amidase signature (AS) domain"/>
    <property type="match status" value="1"/>
</dbReference>
<dbReference type="HAMAP" id="MF_00120">
    <property type="entry name" value="GatA"/>
    <property type="match status" value="1"/>
</dbReference>
<dbReference type="InterPro" id="IPR000120">
    <property type="entry name" value="Amidase"/>
</dbReference>
<dbReference type="InterPro" id="IPR020556">
    <property type="entry name" value="Amidase_CS"/>
</dbReference>
<dbReference type="InterPro" id="IPR023631">
    <property type="entry name" value="Amidase_dom"/>
</dbReference>
<dbReference type="InterPro" id="IPR036928">
    <property type="entry name" value="AS_sf"/>
</dbReference>
<dbReference type="InterPro" id="IPR004412">
    <property type="entry name" value="GatA"/>
</dbReference>
<dbReference type="NCBIfam" id="TIGR00132">
    <property type="entry name" value="gatA"/>
    <property type="match status" value="1"/>
</dbReference>
<dbReference type="PANTHER" id="PTHR11895:SF151">
    <property type="entry name" value="GLUTAMYL-TRNA(GLN) AMIDOTRANSFERASE SUBUNIT A"/>
    <property type="match status" value="1"/>
</dbReference>
<dbReference type="PANTHER" id="PTHR11895">
    <property type="entry name" value="TRANSAMIDASE"/>
    <property type="match status" value="1"/>
</dbReference>
<dbReference type="Pfam" id="PF01425">
    <property type="entry name" value="Amidase"/>
    <property type="match status" value="1"/>
</dbReference>
<dbReference type="SUPFAM" id="SSF75304">
    <property type="entry name" value="Amidase signature (AS) enzymes"/>
    <property type="match status" value="1"/>
</dbReference>
<dbReference type="PROSITE" id="PS00571">
    <property type="entry name" value="AMIDASES"/>
    <property type="match status" value="1"/>
</dbReference>